<reference key="1">
    <citation type="submission" date="2005-07" db="EMBL/GenBank/DDBJ databases">
        <authorList>
            <person name="Mural R.J."/>
            <person name="Adams M.D."/>
            <person name="Myers E.W."/>
            <person name="Smith H.O."/>
            <person name="Venter J.C."/>
        </authorList>
    </citation>
    <scope>NUCLEOTIDE SEQUENCE [LARGE SCALE GENOMIC DNA]</scope>
    <source>
        <strain>Brown Norway</strain>
    </source>
</reference>
<proteinExistence type="inferred from homology"/>
<sequence length="155" mass="16833">MWAQAARVQFRAPLDRGRSFASKVGPRGKVQAADPKTQAPRLVPEGTDRVSAAVVEHLERLALVNFSSREAVDRLEKAVAFADQLHAVDTDGVEPLESVLEDRCLYLRSDKVAEGGCAEELLQNSNHVVEEYFVAPPGNIPLPDMVGKVPSSTAE</sequence>
<dbReference type="EC" id="6.3.5.-" evidence="1"/>
<dbReference type="EMBL" id="CH473973">
    <property type="protein sequence ID" value="EDM13888.1"/>
    <property type="molecule type" value="Genomic_DNA"/>
</dbReference>
<dbReference type="RefSeq" id="NP_001101809.1">
    <property type="nucleotide sequence ID" value="NM_001108339.1"/>
</dbReference>
<dbReference type="FunCoup" id="D3ZY68">
    <property type="interactions" value="1741"/>
</dbReference>
<dbReference type="STRING" id="10116.ENSRNOP00000001536"/>
<dbReference type="PhosphoSitePlus" id="D3ZY68"/>
<dbReference type="jPOST" id="D3ZY68"/>
<dbReference type="PaxDb" id="10116-ENSRNOP00000001536"/>
<dbReference type="PeptideAtlas" id="D3ZY68"/>
<dbReference type="Ensembl" id="ENSRNOT00000070868.3">
    <property type="protein sequence ID" value="ENSRNOP00000063917.3"/>
    <property type="gene ID" value="ENSRNOG00000045621.3"/>
</dbReference>
<dbReference type="GeneID" id="360821"/>
<dbReference type="KEGG" id="rno:360821"/>
<dbReference type="UCSC" id="RGD:1309698">
    <property type="organism name" value="rat"/>
</dbReference>
<dbReference type="AGR" id="RGD:1309698"/>
<dbReference type="CTD" id="283459"/>
<dbReference type="RGD" id="1309698">
    <property type="gene designation" value="Gatc"/>
</dbReference>
<dbReference type="VEuPathDB" id="HostDB:ENSRNOG00000001163"/>
<dbReference type="eggNOG" id="KOG4247">
    <property type="taxonomic scope" value="Eukaryota"/>
</dbReference>
<dbReference type="HOGENOM" id="CLU_105899_0_2_1"/>
<dbReference type="InParanoid" id="D3ZY68"/>
<dbReference type="OMA" id="WPNISAF"/>
<dbReference type="OrthoDB" id="5394539at2759"/>
<dbReference type="PhylomeDB" id="D3ZY68"/>
<dbReference type="TreeFam" id="TF106133"/>
<dbReference type="PRO" id="PR:D3ZY68"/>
<dbReference type="Proteomes" id="UP000002494">
    <property type="component" value="Chromosome 12"/>
</dbReference>
<dbReference type="Proteomes" id="UP000234681">
    <property type="component" value="Chromosome 12"/>
</dbReference>
<dbReference type="Bgee" id="ENSRNOG00000001161">
    <property type="expression patterns" value="Expressed in quadriceps femoris and 19 other cell types or tissues"/>
</dbReference>
<dbReference type="GO" id="GO:0030956">
    <property type="term" value="C:glutamyl-tRNA(Gln) amidotransferase complex"/>
    <property type="evidence" value="ECO:0000266"/>
    <property type="project" value="RGD"/>
</dbReference>
<dbReference type="GO" id="GO:0005739">
    <property type="term" value="C:mitochondrion"/>
    <property type="evidence" value="ECO:0000266"/>
    <property type="project" value="RGD"/>
</dbReference>
<dbReference type="GO" id="GO:0005524">
    <property type="term" value="F:ATP binding"/>
    <property type="evidence" value="ECO:0007669"/>
    <property type="project" value="UniProtKB-KW"/>
</dbReference>
<dbReference type="GO" id="GO:0050567">
    <property type="term" value="F:glutaminyl-tRNA synthase (glutamine-hydrolyzing) activity"/>
    <property type="evidence" value="ECO:0007669"/>
    <property type="project" value="UniProtKB-UniRule"/>
</dbReference>
<dbReference type="GO" id="GO:0070681">
    <property type="term" value="P:glutaminyl-tRNAGln biosynthesis via transamidation"/>
    <property type="evidence" value="ECO:0000266"/>
    <property type="project" value="RGD"/>
</dbReference>
<dbReference type="GO" id="GO:0032543">
    <property type="term" value="P:mitochondrial translation"/>
    <property type="evidence" value="ECO:0000266"/>
    <property type="project" value="RGD"/>
</dbReference>
<dbReference type="GO" id="GO:0006450">
    <property type="term" value="P:regulation of translational fidelity"/>
    <property type="evidence" value="ECO:0007669"/>
    <property type="project" value="InterPro"/>
</dbReference>
<dbReference type="HAMAP" id="MF_00122">
    <property type="entry name" value="GatC"/>
    <property type="match status" value="1"/>
</dbReference>
<dbReference type="InterPro" id="IPR036113">
    <property type="entry name" value="Asp/Glu-ADT_sf_sub_c"/>
</dbReference>
<dbReference type="InterPro" id="IPR003837">
    <property type="entry name" value="GatC"/>
</dbReference>
<dbReference type="NCBIfam" id="TIGR00135">
    <property type="entry name" value="gatC"/>
    <property type="match status" value="1"/>
</dbReference>
<dbReference type="PANTHER" id="PTHR15004">
    <property type="entry name" value="GLUTAMYL-TRNA(GLN) AMIDOTRANSFERASE SUBUNIT C, MITOCHONDRIAL"/>
    <property type="match status" value="1"/>
</dbReference>
<dbReference type="PANTHER" id="PTHR15004:SF0">
    <property type="entry name" value="GLUTAMYL-TRNA(GLN) AMIDOTRANSFERASE SUBUNIT C, MITOCHONDRIAL"/>
    <property type="match status" value="1"/>
</dbReference>
<dbReference type="Pfam" id="PF02686">
    <property type="entry name" value="GatC"/>
    <property type="match status" value="1"/>
</dbReference>
<dbReference type="SUPFAM" id="SSF141000">
    <property type="entry name" value="Glu-tRNAGln amidotransferase C subunit"/>
    <property type="match status" value="1"/>
</dbReference>
<keyword id="KW-0067">ATP-binding</keyword>
<keyword id="KW-0436">Ligase</keyword>
<keyword id="KW-0496">Mitochondrion</keyword>
<keyword id="KW-0547">Nucleotide-binding</keyword>
<keyword id="KW-0648">Protein biosynthesis</keyword>
<keyword id="KW-1185">Reference proteome</keyword>
<keyword id="KW-0809">Transit peptide</keyword>
<feature type="transit peptide" description="Mitochondrion" evidence="1">
    <location>
        <begin position="1"/>
        <end position="20"/>
    </location>
</feature>
<feature type="chain" id="PRO_0000413290" description="Glutamyl-tRNA(Gln) amidotransferase subunit C, mitochondrial">
    <location>
        <begin position="21"/>
        <end position="155"/>
    </location>
</feature>
<feature type="region of interest" description="Disordered" evidence="2">
    <location>
        <begin position="19"/>
        <end position="42"/>
    </location>
</feature>
<evidence type="ECO:0000255" key="1">
    <source>
        <dbReference type="HAMAP-Rule" id="MF_03149"/>
    </source>
</evidence>
<evidence type="ECO:0000256" key="2">
    <source>
        <dbReference type="SAM" id="MobiDB-lite"/>
    </source>
</evidence>
<gene>
    <name type="primary">Gatc</name>
</gene>
<comment type="function">
    <text evidence="1">Allows the formation of correctly charged Gln-tRNA(Gln) through the transamidation of misacylated Glu-tRNA(Gln) in the mitochondria. The reaction takes place in the presence of glutamine and ATP through an activated gamma-phospho-Glu-tRNA(Gln).</text>
</comment>
<comment type="catalytic activity">
    <reaction evidence="1">
        <text>L-glutamyl-tRNA(Gln) + L-glutamine + ATP + H2O = L-glutaminyl-tRNA(Gln) + L-glutamate + ADP + phosphate + H(+)</text>
        <dbReference type="Rhea" id="RHEA:17521"/>
        <dbReference type="Rhea" id="RHEA-COMP:9681"/>
        <dbReference type="Rhea" id="RHEA-COMP:9684"/>
        <dbReference type="ChEBI" id="CHEBI:15377"/>
        <dbReference type="ChEBI" id="CHEBI:15378"/>
        <dbReference type="ChEBI" id="CHEBI:29985"/>
        <dbReference type="ChEBI" id="CHEBI:30616"/>
        <dbReference type="ChEBI" id="CHEBI:43474"/>
        <dbReference type="ChEBI" id="CHEBI:58359"/>
        <dbReference type="ChEBI" id="CHEBI:78520"/>
        <dbReference type="ChEBI" id="CHEBI:78521"/>
        <dbReference type="ChEBI" id="CHEBI:456216"/>
    </reaction>
</comment>
<comment type="subunit">
    <text evidence="1">Subunit of the heterotrimeric GatCAB amidotransferase (AdT) complex, composed of A (QRSL1), B (GATB) and C (GATC) subunits.</text>
</comment>
<comment type="subcellular location">
    <subcellularLocation>
        <location evidence="1">Mitochondrion</location>
    </subcellularLocation>
</comment>
<comment type="similarity">
    <text evidence="1">Belongs to the GatC family.</text>
</comment>
<accession>D3ZY68</accession>
<name>GATC_RAT</name>
<protein>
    <recommendedName>
        <fullName evidence="1">Glutamyl-tRNA(Gln) amidotransferase subunit C, mitochondrial</fullName>
        <shortName evidence="1">Glu-AdT subunit C</shortName>
        <ecNumber evidence="1">6.3.5.-</ecNumber>
    </recommendedName>
</protein>
<organism>
    <name type="scientific">Rattus norvegicus</name>
    <name type="common">Rat</name>
    <dbReference type="NCBI Taxonomy" id="10116"/>
    <lineage>
        <taxon>Eukaryota</taxon>
        <taxon>Metazoa</taxon>
        <taxon>Chordata</taxon>
        <taxon>Craniata</taxon>
        <taxon>Vertebrata</taxon>
        <taxon>Euteleostomi</taxon>
        <taxon>Mammalia</taxon>
        <taxon>Eutheria</taxon>
        <taxon>Euarchontoglires</taxon>
        <taxon>Glires</taxon>
        <taxon>Rodentia</taxon>
        <taxon>Myomorpha</taxon>
        <taxon>Muroidea</taxon>
        <taxon>Muridae</taxon>
        <taxon>Murinae</taxon>
        <taxon>Rattus</taxon>
    </lineage>
</organism>